<name>VM2I_LACMU</name>
<keyword id="KW-1217">Cell adhesion impairing toxin</keyword>
<keyword id="KW-0903">Direct protein sequencing</keyword>
<keyword id="KW-1015">Disulfide bond</keyword>
<keyword id="KW-1199">Hemostasis impairing toxin</keyword>
<keyword id="KW-1201">Platelet aggregation inhibiting toxin</keyword>
<keyword id="KW-0964">Secreted</keyword>
<keyword id="KW-0800">Toxin</keyword>
<sequence>EAGEECDCGAPANPCCDAATCKLRPGAQCAEGLCCDQCRFIKKGKICRRARGDNPDDRCTGQSADCPRNGYYG</sequence>
<accession>P31990</accession>
<evidence type="ECO:0000250" key="1"/>
<evidence type="ECO:0000250" key="2">
    <source>
        <dbReference type="UniProtKB" id="Q0NZX5"/>
    </source>
</evidence>
<evidence type="ECO:0000255" key="3">
    <source>
        <dbReference type="PROSITE-ProRule" id="PRU00068"/>
    </source>
</evidence>
<evidence type="ECO:0000256" key="4">
    <source>
        <dbReference type="SAM" id="MobiDB-lite"/>
    </source>
</evidence>
<evidence type="ECO:0000269" key="5">
    <source>
    </source>
</evidence>
<evidence type="ECO:0000303" key="6">
    <source>
    </source>
</evidence>
<evidence type="ECO:0000305" key="7"/>
<evidence type="ECO:0000305" key="8">
    <source>
    </source>
</evidence>
<reference key="1">
    <citation type="journal article" date="1993" name="J. Biol. Chem.">
        <title>Characterization of the integrin specificities of disintegrins isolated from American pit viper venoms.</title>
        <authorList>
            <person name="Scarborough R.M."/>
            <person name="Rose J.W."/>
            <person name="Naughton M.A."/>
            <person name="Phillips D.R."/>
            <person name="Nannizzi L."/>
            <person name="Arfsten A."/>
            <person name="Campbell A.M."/>
            <person name="Charo I.F."/>
        </authorList>
    </citation>
    <scope>PROTEIN SEQUENCE</scope>
    <scope>SUBCELLULAR LOCATION</scope>
    <source>
        <tissue>Venom</tissue>
    </source>
</reference>
<proteinExistence type="evidence at protein level"/>
<organism>
    <name type="scientific">Lachesis muta muta</name>
    <name type="common">Bushmaster</name>
    <dbReference type="NCBI Taxonomy" id="8753"/>
    <lineage>
        <taxon>Eukaryota</taxon>
        <taxon>Metazoa</taxon>
        <taxon>Chordata</taxon>
        <taxon>Craniata</taxon>
        <taxon>Vertebrata</taxon>
        <taxon>Euteleostomi</taxon>
        <taxon>Lepidosauria</taxon>
        <taxon>Squamata</taxon>
        <taxon>Bifurcata</taxon>
        <taxon>Unidentata</taxon>
        <taxon>Episquamata</taxon>
        <taxon>Toxicofera</taxon>
        <taxon>Serpentes</taxon>
        <taxon>Colubroidea</taxon>
        <taxon>Viperidae</taxon>
        <taxon>Crotalinae</taxon>
        <taxon>Lachesis</taxon>
    </lineage>
</organism>
<protein>
    <recommendedName>
        <fullName evidence="6">Disintegrin lachesin</fullName>
    </recommendedName>
    <alternativeName>
        <fullName>Platelet aggregation activation inhibitor</fullName>
    </alternativeName>
</protein>
<dbReference type="PIR" id="E43019">
    <property type="entry name" value="E43019"/>
</dbReference>
<dbReference type="SMR" id="P31990"/>
<dbReference type="GO" id="GO:0005576">
    <property type="term" value="C:extracellular region"/>
    <property type="evidence" value="ECO:0007669"/>
    <property type="project" value="UniProtKB-SubCell"/>
</dbReference>
<dbReference type="GO" id="GO:0090729">
    <property type="term" value="F:toxin activity"/>
    <property type="evidence" value="ECO:0007669"/>
    <property type="project" value="UniProtKB-KW"/>
</dbReference>
<dbReference type="FunFam" id="4.10.70.10:FF:000005">
    <property type="entry name" value="Zinc metalloproteinase/disintegrin"/>
    <property type="match status" value="1"/>
</dbReference>
<dbReference type="Gene3D" id="4.10.70.10">
    <property type="entry name" value="Disintegrin domain"/>
    <property type="match status" value="1"/>
</dbReference>
<dbReference type="InterPro" id="IPR018358">
    <property type="entry name" value="Disintegrin_CS"/>
</dbReference>
<dbReference type="InterPro" id="IPR001762">
    <property type="entry name" value="Disintegrin_dom"/>
</dbReference>
<dbReference type="InterPro" id="IPR036436">
    <property type="entry name" value="Disintegrin_dom_sf"/>
</dbReference>
<dbReference type="PANTHER" id="PTHR11905">
    <property type="entry name" value="ADAM A DISINTEGRIN AND METALLOPROTEASE DOMAIN"/>
    <property type="match status" value="1"/>
</dbReference>
<dbReference type="PANTHER" id="PTHR11905:SF159">
    <property type="entry name" value="ADAM METALLOPROTEASE"/>
    <property type="match status" value="1"/>
</dbReference>
<dbReference type="Pfam" id="PF00200">
    <property type="entry name" value="Disintegrin"/>
    <property type="match status" value="1"/>
</dbReference>
<dbReference type="PRINTS" id="PR00289">
    <property type="entry name" value="DISINTEGRIN"/>
</dbReference>
<dbReference type="SMART" id="SM00050">
    <property type="entry name" value="DISIN"/>
    <property type="match status" value="1"/>
</dbReference>
<dbReference type="SUPFAM" id="SSF57552">
    <property type="entry name" value="Blood coagulation inhibitor (disintegrin)"/>
    <property type="match status" value="1"/>
</dbReference>
<dbReference type="PROSITE" id="PS00427">
    <property type="entry name" value="DISINTEGRIN_1"/>
    <property type="match status" value="1"/>
</dbReference>
<dbReference type="PROSITE" id="PS50214">
    <property type="entry name" value="DISINTEGRIN_2"/>
    <property type="match status" value="1"/>
</dbReference>
<feature type="chain" id="PRO_0000101806" description="Disintegrin lachesin" evidence="5">
    <location>
        <begin position="1"/>
        <end position="73"/>
    </location>
</feature>
<feature type="domain" description="Disintegrin" evidence="3">
    <location>
        <begin position="1"/>
        <end position="73"/>
    </location>
</feature>
<feature type="region of interest" description="Disordered" evidence="4">
    <location>
        <begin position="51"/>
        <end position="73"/>
    </location>
</feature>
<feature type="short sequence motif" description="Cell attachment site">
    <location>
        <begin position="51"/>
        <end position="53"/>
    </location>
</feature>
<feature type="disulfide bond" evidence="2">
    <location>
        <begin position="6"/>
        <end position="21"/>
    </location>
</feature>
<feature type="disulfide bond" evidence="2">
    <location>
        <begin position="8"/>
        <end position="16"/>
    </location>
</feature>
<feature type="disulfide bond" evidence="2">
    <location>
        <begin position="15"/>
        <end position="38"/>
    </location>
</feature>
<feature type="disulfide bond" evidence="2">
    <location>
        <begin position="29"/>
        <end position="35"/>
    </location>
</feature>
<feature type="disulfide bond" evidence="2">
    <location>
        <begin position="34"/>
        <end position="59"/>
    </location>
</feature>
<feature type="disulfide bond" evidence="2 3">
    <location>
        <begin position="47"/>
        <end position="66"/>
    </location>
</feature>
<comment type="function">
    <text>Inhibits fibrinogen interaction with platelets. Acts by binding to alpha-IIb/beta-3 (ITGA2B/ITGB3) on the platelet surface and inhibits aggregation induced by ADP, thrombin, platelet-activating factor and collagen.</text>
</comment>
<comment type="subunit">
    <text evidence="1">Monomer (disintegrin).</text>
</comment>
<comment type="subcellular location">
    <subcellularLocation>
        <location evidence="5">Secreted</location>
    </subcellularLocation>
</comment>
<comment type="tissue specificity">
    <text evidence="8">Expressed by the venom gland.</text>
</comment>
<comment type="miscellaneous">
    <text>The disintegrin belongs to the medium disintegrin subfamily.</text>
</comment>
<comment type="similarity">
    <text evidence="7">Belongs to the venom metalloproteinase (M12B) family. P-II subfamily. P-IIa sub-subfamily.</text>
</comment>